<dbReference type="EC" id="2.1.1.222" evidence="1"/>
<dbReference type="EC" id="2.1.1.64" evidence="1"/>
<dbReference type="EMBL" id="AE008917">
    <property type="protein sequence ID" value="AAL51370.1"/>
    <property type="molecule type" value="Genomic_DNA"/>
</dbReference>
<dbReference type="PIR" id="AG3275">
    <property type="entry name" value="AG3275"/>
</dbReference>
<dbReference type="RefSeq" id="WP_004684402.1">
    <property type="nucleotide sequence ID" value="NZ_GG703778.1"/>
</dbReference>
<dbReference type="SMR" id="Q8YJ98"/>
<dbReference type="GeneID" id="29593530"/>
<dbReference type="KEGG" id="bme:BMEI0188"/>
<dbReference type="KEGG" id="bmel:DK63_1248"/>
<dbReference type="PATRIC" id="fig|224914.52.peg.1315"/>
<dbReference type="eggNOG" id="COG2227">
    <property type="taxonomic scope" value="Bacteria"/>
</dbReference>
<dbReference type="PhylomeDB" id="Q8YJ98"/>
<dbReference type="UniPathway" id="UPA00232"/>
<dbReference type="Proteomes" id="UP000000419">
    <property type="component" value="Chromosome I"/>
</dbReference>
<dbReference type="GO" id="GO:0102208">
    <property type="term" value="F:2-polyprenyl-6-hydroxyphenol methylase activity"/>
    <property type="evidence" value="ECO:0007669"/>
    <property type="project" value="UniProtKB-EC"/>
</dbReference>
<dbReference type="GO" id="GO:0061542">
    <property type="term" value="F:3-demethylubiquinol 3-O-methyltransferase activity"/>
    <property type="evidence" value="ECO:0007669"/>
    <property type="project" value="UniProtKB-UniRule"/>
</dbReference>
<dbReference type="GO" id="GO:0010420">
    <property type="term" value="F:polyprenyldihydroxybenzoate methyltransferase activity"/>
    <property type="evidence" value="ECO:0007669"/>
    <property type="project" value="InterPro"/>
</dbReference>
<dbReference type="GO" id="GO:0032259">
    <property type="term" value="P:methylation"/>
    <property type="evidence" value="ECO:0007669"/>
    <property type="project" value="UniProtKB-KW"/>
</dbReference>
<dbReference type="CDD" id="cd02440">
    <property type="entry name" value="AdoMet_MTases"/>
    <property type="match status" value="1"/>
</dbReference>
<dbReference type="Gene3D" id="3.40.50.150">
    <property type="entry name" value="Vaccinia Virus protein VP39"/>
    <property type="match status" value="1"/>
</dbReference>
<dbReference type="HAMAP" id="MF_00472">
    <property type="entry name" value="UbiG"/>
    <property type="match status" value="1"/>
</dbReference>
<dbReference type="InterPro" id="IPR029063">
    <property type="entry name" value="SAM-dependent_MTases_sf"/>
</dbReference>
<dbReference type="InterPro" id="IPR010233">
    <property type="entry name" value="UbiG_MeTrfase"/>
</dbReference>
<dbReference type="NCBIfam" id="TIGR01983">
    <property type="entry name" value="UbiG"/>
    <property type="match status" value="1"/>
</dbReference>
<dbReference type="PANTHER" id="PTHR43464">
    <property type="entry name" value="METHYLTRANSFERASE"/>
    <property type="match status" value="1"/>
</dbReference>
<dbReference type="PANTHER" id="PTHR43464:SF19">
    <property type="entry name" value="UBIQUINONE BIOSYNTHESIS O-METHYLTRANSFERASE, MITOCHONDRIAL"/>
    <property type="match status" value="1"/>
</dbReference>
<dbReference type="Pfam" id="PF13489">
    <property type="entry name" value="Methyltransf_23"/>
    <property type="match status" value="1"/>
</dbReference>
<dbReference type="SUPFAM" id="SSF53335">
    <property type="entry name" value="S-adenosyl-L-methionine-dependent methyltransferases"/>
    <property type="match status" value="1"/>
</dbReference>
<feature type="chain" id="PRO_0000193372" description="Ubiquinone biosynthesis O-methyltransferase">
    <location>
        <begin position="1"/>
        <end position="248"/>
    </location>
</feature>
<feature type="binding site" evidence="1">
    <location>
        <position position="41"/>
    </location>
    <ligand>
        <name>S-adenosyl-L-methionine</name>
        <dbReference type="ChEBI" id="CHEBI:59789"/>
    </ligand>
</feature>
<feature type="binding site" evidence="1">
    <location>
        <position position="72"/>
    </location>
    <ligand>
        <name>S-adenosyl-L-methionine</name>
        <dbReference type="ChEBI" id="CHEBI:59789"/>
    </ligand>
</feature>
<feature type="binding site" evidence="1">
    <location>
        <position position="93"/>
    </location>
    <ligand>
        <name>S-adenosyl-L-methionine</name>
        <dbReference type="ChEBI" id="CHEBI:59789"/>
    </ligand>
</feature>
<feature type="binding site" evidence="1">
    <location>
        <position position="136"/>
    </location>
    <ligand>
        <name>S-adenosyl-L-methionine</name>
        <dbReference type="ChEBI" id="CHEBI:59789"/>
    </ligand>
</feature>
<sequence length="248" mass="27516">MTETARTTIDASEIEHFSRIAAQWWDPQGKFRPLHKFNPTRLAYIKEKVCAKFNRDPNAPRPLEGLRFLDIGCGGGLLCEPMARLGATVIGADASATNIEVAKIHAAQSSLDIDYRATTTEALADAGEKFDVVLNMEVVEHVSDVDLFMSATSAMVKPGGLMFVATINRTLKAYGLAIIGAEYVLRWLPRGTHQYEKLVRPEELEAAFSKADLRLIDKLGVTYNPLADSWNRSRDMDVNYMVLAERPA</sequence>
<gene>
    <name evidence="1" type="primary">ubiG</name>
    <name type="ordered locus">BMEI0188</name>
</gene>
<comment type="function">
    <text evidence="1">O-methyltransferase that catalyzes the 2 O-methylation steps in the ubiquinone biosynthetic pathway.</text>
</comment>
<comment type="catalytic activity">
    <reaction evidence="1">
        <text>a 3-demethylubiquinol + S-adenosyl-L-methionine = a ubiquinol + S-adenosyl-L-homocysteine + H(+)</text>
        <dbReference type="Rhea" id="RHEA:44380"/>
        <dbReference type="Rhea" id="RHEA-COMP:9566"/>
        <dbReference type="Rhea" id="RHEA-COMP:10914"/>
        <dbReference type="ChEBI" id="CHEBI:15378"/>
        <dbReference type="ChEBI" id="CHEBI:17976"/>
        <dbReference type="ChEBI" id="CHEBI:57856"/>
        <dbReference type="ChEBI" id="CHEBI:59789"/>
        <dbReference type="ChEBI" id="CHEBI:84422"/>
        <dbReference type="EC" id="2.1.1.64"/>
    </reaction>
</comment>
<comment type="catalytic activity">
    <reaction evidence="1">
        <text>a 3-(all-trans-polyprenyl)benzene-1,2-diol + S-adenosyl-L-methionine = a 2-methoxy-6-(all-trans-polyprenyl)phenol + S-adenosyl-L-homocysteine + H(+)</text>
        <dbReference type="Rhea" id="RHEA:31411"/>
        <dbReference type="Rhea" id="RHEA-COMP:9550"/>
        <dbReference type="Rhea" id="RHEA-COMP:9551"/>
        <dbReference type="ChEBI" id="CHEBI:15378"/>
        <dbReference type="ChEBI" id="CHEBI:57856"/>
        <dbReference type="ChEBI" id="CHEBI:59789"/>
        <dbReference type="ChEBI" id="CHEBI:62729"/>
        <dbReference type="ChEBI" id="CHEBI:62731"/>
        <dbReference type="EC" id="2.1.1.222"/>
    </reaction>
</comment>
<comment type="pathway">
    <text evidence="1">Cofactor biosynthesis; ubiquinone biosynthesis.</text>
</comment>
<comment type="similarity">
    <text evidence="1">Belongs to the methyltransferase superfamily. UbiG/COQ3 family.</text>
</comment>
<evidence type="ECO:0000255" key="1">
    <source>
        <dbReference type="HAMAP-Rule" id="MF_00472"/>
    </source>
</evidence>
<keyword id="KW-0489">Methyltransferase</keyword>
<keyword id="KW-0949">S-adenosyl-L-methionine</keyword>
<keyword id="KW-0808">Transferase</keyword>
<keyword id="KW-0831">Ubiquinone biosynthesis</keyword>
<proteinExistence type="inferred from homology"/>
<protein>
    <recommendedName>
        <fullName evidence="1">Ubiquinone biosynthesis O-methyltransferase</fullName>
    </recommendedName>
    <alternativeName>
        <fullName evidence="1">2-polyprenyl-6-hydroxyphenol methylase</fullName>
        <ecNumber evidence="1">2.1.1.222</ecNumber>
    </alternativeName>
    <alternativeName>
        <fullName evidence="1">3-demethylubiquinone 3-O-methyltransferase</fullName>
        <ecNumber evidence="1">2.1.1.64</ecNumber>
    </alternativeName>
</protein>
<name>UBIG_BRUME</name>
<reference key="1">
    <citation type="journal article" date="2002" name="Proc. Natl. Acad. Sci. U.S.A.">
        <title>The genome sequence of the facultative intracellular pathogen Brucella melitensis.</title>
        <authorList>
            <person name="DelVecchio V.G."/>
            <person name="Kapatral V."/>
            <person name="Redkar R.J."/>
            <person name="Patra G."/>
            <person name="Mujer C."/>
            <person name="Los T."/>
            <person name="Ivanova N."/>
            <person name="Anderson I."/>
            <person name="Bhattacharyya A."/>
            <person name="Lykidis A."/>
            <person name="Reznik G."/>
            <person name="Jablonski L."/>
            <person name="Larsen N."/>
            <person name="D'Souza M."/>
            <person name="Bernal A."/>
            <person name="Mazur M."/>
            <person name="Goltsman E."/>
            <person name="Selkov E."/>
            <person name="Elzer P.H."/>
            <person name="Hagius S."/>
            <person name="O'Callaghan D."/>
            <person name="Letesson J.-J."/>
            <person name="Haselkorn R."/>
            <person name="Kyrpides N.C."/>
            <person name="Overbeek R."/>
        </authorList>
    </citation>
    <scope>NUCLEOTIDE SEQUENCE [LARGE SCALE GENOMIC DNA]</scope>
    <source>
        <strain>ATCC 23456 / CCUG 17765 / NCTC 10094 / 16M</strain>
    </source>
</reference>
<accession>Q8YJ98</accession>
<organism>
    <name type="scientific">Brucella melitensis biotype 1 (strain ATCC 23456 / CCUG 17765 / NCTC 10094 / 16M)</name>
    <dbReference type="NCBI Taxonomy" id="224914"/>
    <lineage>
        <taxon>Bacteria</taxon>
        <taxon>Pseudomonadati</taxon>
        <taxon>Pseudomonadota</taxon>
        <taxon>Alphaproteobacteria</taxon>
        <taxon>Hyphomicrobiales</taxon>
        <taxon>Brucellaceae</taxon>
        <taxon>Brucella/Ochrobactrum group</taxon>
        <taxon>Brucella</taxon>
    </lineage>
</organism>